<sequence>MALTLFDTDEYRPPVWKSYLYQLQQEAPHPRRVTCTCEVENRPKYYGREYHGMISREETDQLLSVAEGSYLIRESQRQPGTYTLALRFGSQTRNFRLYYDGKHFVGEKRFESIHDLVTDGLITLYIETKAAEYIAKMTINPIYEHIGYTTLNREPAYKQHMAVLKETHDEKEATGQDGVSEKRLTSLVRRATLKENEQIPKYEKVHNFKVHTFRGPHWCEYCANFMWGLIAQGVKCADCGLNVHKQCSKMVPNDCKPDLKHVKKVYSCDLTTLVKAHITKRPMVVDMCIREIESRGLNSEGLYRVSGFSDLIEDVKMAFDRDGEKADISVNMYEDINIITGALKLYFRDLPIPLITYDAYPKFIESAKIMDPDEQLETLHEALRSLPPAHCETLRYLMAHLKRVTLHEKENLMSAENLGIVFGPTLMRSPELDPMAALNDIRYQRLVVELLIKNEDILF</sequence>
<accession>Q91V57</accession>
<accession>A2ATM0</accession>
<accession>Q3UGY3</accession>
<accession>Q7TQE5</accession>
<accession>Q8BWU6</accession>
<accession>Q9D9B3</accession>
<organism>
    <name type="scientific">Mus musculus</name>
    <name type="common">Mouse</name>
    <dbReference type="NCBI Taxonomy" id="10090"/>
    <lineage>
        <taxon>Eukaryota</taxon>
        <taxon>Metazoa</taxon>
        <taxon>Chordata</taxon>
        <taxon>Craniata</taxon>
        <taxon>Vertebrata</taxon>
        <taxon>Euteleostomi</taxon>
        <taxon>Mammalia</taxon>
        <taxon>Eutheria</taxon>
        <taxon>Euarchontoglires</taxon>
        <taxon>Glires</taxon>
        <taxon>Rodentia</taxon>
        <taxon>Myomorpha</taxon>
        <taxon>Muroidea</taxon>
        <taxon>Muridae</taxon>
        <taxon>Murinae</taxon>
        <taxon>Mus</taxon>
        <taxon>Mus</taxon>
    </lineage>
</organism>
<reference key="1">
    <citation type="journal article" date="2001" name="Mamm. Genome">
        <title>High-throughput sequence identification of gene coding variants within alcohol-related QTLs.</title>
        <authorList>
            <person name="Ehringer M.A."/>
            <person name="Thompson J."/>
            <person name="Conroy O."/>
            <person name="Xu Y."/>
            <person name="Yang F."/>
            <person name="Canniff J."/>
            <person name="Beeson M."/>
            <person name="Gordon L."/>
            <person name="Bennett B."/>
            <person name="Johnson T.E."/>
            <person name="Sikela J.M."/>
        </authorList>
    </citation>
    <scope>NUCLEOTIDE SEQUENCE [MRNA] (ISOFORM 2)</scope>
    <source>
        <strain>ILS</strain>
        <strain>ISS</strain>
    </source>
</reference>
<reference key="2">
    <citation type="journal article" date="2005" name="Science">
        <title>The transcriptional landscape of the mammalian genome.</title>
        <authorList>
            <person name="Carninci P."/>
            <person name="Kasukawa T."/>
            <person name="Katayama S."/>
            <person name="Gough J."/>
            <person name="Frith M.C."/>
            <person name="Maeda N."/>
            <person name="Oyama R."/>
            <person name="Ravasi T."/>
            <person name="Lenhard B."/>
            <person name="Wells C."/>
            <person name="Kodzius R."/>
            <person name="Shimokawa K."/>
            <person name="Bajic V.B."/>
            <person name="Brenner S.E."/>
            <person name="Batalov S."/>
            <person name="Forrest A.R."/>
            <person name="Zavolan M."/>
            <person name="Davis M.J."/>
            <person name="Wilming L.G."/>
            <person name="Aidinis V."/>
            <person name="Allen J.E."/>
            <person name="Ambesi-Impiombato A."/>
            <person name="Apweiler R."/>
            <person name="Aturaliya R.N."/>
            <person name="Bailey T.L."/>
            <person name="Bansal M."/>
            <person name="Baxter L."/>
            <person name="Beisel K.W."/>
            <person name="Bersano T."/>
            <person name="Bono H."/>
            <person name="Chalk A.M."/>
            <person name="Chiu K.P."/>
            <person name="Choudhary V."/>
            <person name="Christoffels A."/>
            <person name="Clutterbuck D.R."/>
            <person name="Crowe M.L."/>
            <person name="Dalla E."/>
            <person name="Dalrymple B.P."/>
            <person name="de Bono B."/>
            <person name="Della Gatta G."/>
            <person name="di Bernardo D."/>
            <person name="Down T."/>
            <person name="Engstrom P."/>
            <person name="Fagiolini M."/>
            <person name="Faulkner G."/>
            <person name="Fletcher C.F."/>
            <person name="Fukushima T."/>
            <person name="Furuno M."/>
            <person name="Futaki S."/>
            <person name="Gariboldi M."/>
            <person name="Georgii-Hemming P."/>
            <person name="Gingeras T.R."/>
            <person name="Gojobori T."/>
            <person name="Green R.E."/>
            <person name="Gustincich S."/>
            <person name="Harbers M."/>
            <person name="Hayashi Y."/>
            <person name="Hensch T.K."/>
            <person name="Hirokawa N."/>
            <person name="Hill D."/>
            <person name="Huminiecki L."/>
            <person name="Iacono M."/>
            <person name="Ikeo K."/>
            <person name="Iwama A."/>
            <person name="Ishikawa T."/>
            <person name="Jakt M."/>
            <person name="Kanapin A."/>
            <person name="Katoh M."/>
            <person name="Kawasawa Y."/>
            <person name="Kelso J."/>
            <person name="Kitamura H."/>
            <person name="Kitano H."/>
            <person name="Kollias G."/>
            <person name="Krishnan S.P."/>
            <person name="Kruger A."/>
            <person name="Kummerfeld S.K."/>
            <person name="Kurochkin I.V."/>
            <person name="Lareau L.F."/>
            <person name="Lazarevic D."/>
            <person name="Lipovich L."/>
            <person name="Liu J."/>
            <person name="Liuni S."/>
            <person name="McWilliam S."/>
            <person name="Madan Babu M."/>
            <person name="Madera M."/>
            <person name="Marchionni L."/>
            <person name="Matsuda H."/>
            <person name="Matsuzawa S."/>
            <person name="Miki H."/>
            <person name="Mignone F."/>
            <person name="Miyake S."/>
            <person name="Morris K."/>
            <person name="Mottagui-Tabar S."/>
            <person name="Mulder N."/>
            <person name="Nakano N."/>
            <person name="Nakauchi H."/>
            <person name="Ng P."/>
            <person name="Nilsson R."/>
            <person name="Nishiguchi S."/>
            <person name="Nishikawa S."/>
            <person name="Nori F."/>
            <person name="Ohara O."/>
            <person name="Okazaki Y."/>
            <person name="Orlando V."/>
            <person name="Pang K.C."/>
            <person name="Pavan W.J."/>
            <person name="Pavesi G."/>
            <person name="Pesole G."/>
            <person name="Petrovsky N."/>
            <person name="Piazza S."/>
            <person name="Reed J."/>
            <person name="Reid J.F."/>
            <person name="Ring B.Z."/>
            <person name="Ringwald M."/>
            <person name="Rost B."/>
            <person name="Ruan Y."/>
            <person name="Salzberg S.L."/>
            <person name="Sandelin A."/>
            <person name="Schneider C."/>
            <person name="Schoenbach C."/>
            <person name="Sekiguchi K."/>
            <person name="Semple C.A."/>
            <person name="Seno S."/>
            <person name="Sessa L."/>
            <person name="Sheng Y."/>
            <person name="Shibata Y."/>
            <person name="Shimada H."/>
            <person name="Shimada K."/>
            <person name="Silva D."/>
            <person name="Sinclair B."/>
            <person name="Sperling S."/>
            <person name="Stupka E."/>
            <person name="Sugiura K."/>
            <person name="Sultana R."/>
            <person name="Takenaka Y."/>
            <person name="Taki K."/>
            <person name="Tammoja K."/>
            <person name="Tan S.L."/>
            <person name="Tang S."/>
            <person name="Taylor M.S."/>
            <person name="Tegner J."/>
            <person name="Teichmann S.A."/>
            <person name="Ueda H.R."/>
            <person name="van Nimwegen E."/>
            <person name="Verardo R."/>
            <person name="Wei C.L."/>
            <person name="Yagi K."/>
            <person name="Yamanishi H."/>
            <person name="Zabarovsky E."/>
            <person name="Zhu S."/>
            <person name="Zimmer A."/>
            <person name="Hide W."/>
            <person name="Bult C."/>
            <person name="Grimmond S.M."/>
            <person name="Teasdale R.D."/>
            <person name="Liu E.T."/>
            <person name="Brusic V."/>
            <person name="Quackenbush J."/>
            <person name="Wahlestedt C."/>
            <person name="Mattick J.S."/>
            <person name="Hume D.A."/>
            <person name="Kai C."/>
            <person name="Sasaki D."/>
            <person name="Tomaru Y."/>
            <person name="Fukuda S."/>
            <person name="Kanamori-Katayama M."/>
            <person name="Suzuki M."/>
            <person name="Aoki J."/>
            <person name="Arakawa T."/>
            <person name="Iida J."/>
            <person name="Imamura K."/>
            <person name="Itoh M."/>
            <person name="Kato T."/>
            <person name="Kawaji H."/>
            <person name="Kawagashira N."/>
            <person name="Kawashima T."/>
            <person name="Kojima M."/>
            <person name="Kondo S."/>
            <person name="Konno H."/>
            <person name="Nakano K."/>
            <person name="Ninomiya N."/>
            <person name="Nishio T."/>
            <person name="Okada M."/>
            <person name="Plessy C."/>
            <person name="Shibata K."/>
            <person name="Shiraki T."/>
            <person name="Suzuki S."/>
            <person name="Tagami M."/>
            <person name="Waki K."/>
            <person name="Watahiki A."/>
            <person name="Okamura-Oho Y."/>
            <person name="Suzuki H."/>
            <person name="Kawai J."/>
            <person name="Hayashizaki Y."/>
        </authorList>
    </citation>
    <scope>NUCLEOTIDE SEQUENCE [LARGE SCALE MRNA] (ISOFORMS 1; 2 AND 3)</scope>
    <source>
        <strain>C57BL/6J</strain>
        <tissue>Brain</tissue>
    </source>
</reference>
<reference key="3">
    <citation type="journal article" date="2009" name="PLoS Biol.">
        <title>Lineage-specific biology revealed by a finished genome assembly of the mouse.</title>
        <authorList>
            <person name="Church D.M."/>
            <person name="Goodstadt L."/>
            <person name="Hillier L.W."/>
            <person name="Zody M.C."/>
            <person name="Goldstein S."/>
            <person name="She X."/>
            <person name="Bult C.J."/>
            <person name="Agarwala R."/>
            <person name="Cherry J.L."/>
            <person name="DiCuccio M."/>
            <person name="Hlavina W."/>
            <person name="Kapustin Y."/>
            <person name="Meric P."/>
            <person name="Maglott D."/>
            <person name="Birtle Z."/>
            <person name="Marques A.C."/>
            <person name="Graves T."/>
            <person name="Zhou S."/>
            <person name="Teague B."/>
            <person name="Potamousis K."/>
            <person name="Churas C."/>
            <person name="Place M."/>
            <person name="Herschleb J."/>
            <person name="Runnheim R."/>
            <person name="Forrest D."/>
            <person name="Amos-Landgraf J."/>
            <person name="Schwartz D.C."/>
            <person name="Cheng Z."/>
            <person name="Lindblad-Toh K."/>
            <person name="Eichler E.E."/>
            <person name="Ponting C.P."/>
        </authorList>
    </citation>
    <scope>NUCLEOTIDE SEQUENCE [LARGE SCALE GENOMIC DNA]</scope>
    <source>
        <strain>C57BL/6J</strain>
    </source>
</reference>
<reference key="4">
    <citation type="journal article" date="2004" name="Genome Res.">
        <title>The status, quality, and expansion of the NIH full-length cDNA project: the Mammalian Gene Collection (MGC).</title>
        <authorList>
            <consortium name="The MGC Project Team"/>
        </authorList>
    </citation>
    <scope>NUCLEOTIDE SEQUENCE [LARGE SCALE MRNA] (ISOFORM 2)</scope>
    <source>
        <strain>C57BL/6J</strain>
        <tissue>Brain</tissue>
        <tissue>Colon</tissue>
        <tissue>Eye</tissue>
    </source>
</reference>
<reference key="5">
    <citation type="journal article" date="2007" name="Cell">
        <title>Rac-GAP alpha-chimerin regulates motor-circuit formation as a key mediator of EphrinB3/EphA4 forward signaling.</title>
        <authorList>
            <person name="Iwasato T."/>
            <person name="Katoh H."/>
            <person name="Nishimaru H."/>
            <person name="Ishikawa Y."/>
            <person name="Inoue H."/>
            <person name="Saito Y.M."/>
            <person name="Ando R."/>
            <person name="Iwama M."/>
            <person name="Takahashi R."/>
            <person name="Negishi M."/>
            <person name="Itohara S."/>
        </authorList>
    </citation>
    <scope>DISRUPTION PHENOTYPE</scope>
    <scope>INTERACTION WITH EPHA4</scope>
</reference>
<reference key="6">
    <citation type="journal article" date="2007" name="Neuron">
        <title>alpha2-Chimaerin is an essential EphA4 effector in the assembly of neuronal locomotor circuits.</title>
        <authorList>
            <person name="Beg A.A."/>
            <person name="Sommer J.E."/>
            <person name="Martin J.H."/>
            <person name="Scheiffele P."/>
        </authorList>
    </citation>
    <scope>FUNCTION IN EPHA4 SIGNALING</scope>
    <scope>INTERACTION WITH EPHA4; EPHB1 AND EPHB2</scope>
    <scope>PHOSPHORYLATION</scope>
</reference>
<reference key="7">
    <citation type="journal article" date="2010" name="Cell">
        <title>A tissue-specific atlas of mouse protein phosphorylation and expression.</title>
        <authorList>
            <person name="Huttlin E.L."/>
            <person name="Jedrychowski M.P."/>
            <person name="Elias J.E."/>
            <person name="Goswami T."/>
            <person name="Rad R."/>
            <person name="Beausoleil S.A."/>
            <person name="Villen J."/>
            <person name="Haas W."/>
            <person name="Sowa M.E."/>
            <person name="Gygi S.P."/>
        </authorList>
    </citation>
    <scope>IDENTIFICATION BY MASS SPECTROMETRY [LARGE SCALE ANALYSIS]</scope>
    <source>
        <tissue>Testis</tissue>
    </source>
</reference>
<dbReference type="EMBL" id="AF332069">
    <property type="protein sequence ID" value="AAK56097.1"/>
    <property type="molecule type" value="mRNA"/>
</dbReference>
<dbReference type="EMBL" id="AF332070">
    <property type="protein sequence ID" value="AAK56098.1"/>
    <property type="molecule type" value="mRNA"/>
</dbReference>
<dbReference type="EMBL" id="AK049943">
    <property type="protein sequence ID" value="BAC33996.1"/>
    <property type="molecule type" value="mRNA"/>
</dbReference>
<dbReference type="EMBL" id="AK007182">
    <property type="protein sequence ID" value="BAB24888.1"/>
    <property type="molecule type" value="mRNA"/>
</dbReference>
<dbReference type="EMBL" id="AK075606">
    <property type="protein sequence ID" value="BAC35853.1"/>
    <property type="molecule type" value="mRNA"/>
</dbReference>
<dbReference type="EMBL" id="AK147686">
    <property type="protein sequence ID" value="BAE28074.1"/>
    <property type="molecule type" value="mRNA"/>
</dbReference>
<dbReference type="EMBL" id="AL928889">
    <property type="status" value="NOT_ANNOTATED_CDS"/>
    <property type="molecule type" value="Genomic_DNA"/>
</dbReference>
<dbReference type="EMBL" id="BC010825">
    <property type="protein sequence ID" value="AAH10825.1"/>
    <property type="molecule type" value="mRNA"/>
</dbReference>
<dbReference type="EMBL" id="BC024796">
    <property type="protein sequence ID" value="AAH24796.1"/>
    <property type="molecule type" value="mRNA"/>
</dbReference>
<dbReference type="EMBL" id="BC025023">
    <property type="protein sequence ID" value="AAH25023.1"/>
    <property type="molecule type" value="mRNA"/>
</dbReference>
<dbReference type="EMBL" id="BC054770">
    <property type="protein sequence ID" value="AAH54770.1"/>
    <property type="molecule type" value="mRNA"/>
</dbReference>
<dbReference type="CCDS" id="CCDS16133.1">
    <molecule id="Q91V57-2"/>
</dbReference>
<dbReference type="CCDS" id="CCDS38145.1">
    <molecule id="Q91V57-3"/>
</dbReference>
<dbReference type="CCDS" id="CCDS50608.1">
    <molecule id="Q91V57-1"/>
</dbReference>
<dbReference type="RefSeq" id="NP_001106717.2">
    <molecule id="Q91V57-1"/>
    <property type="nucleotide sequence ID" value="NM_001113246.2"/>
</dbReference>
<dbReference type="RefSeq" id="NP_083992.1">
    <molecule id="Q91V57-3"/>
    <property type="nucleotide sequence ID" value="NM_029716.3"/>
</dbReference>
<dbReference type="RefSeq" id="NP_786928.2">
    <molecule id="Q91V57-2"/>
    <property type="nucleotide sequence ID" value="NM_175752.3"/>
</dbReference>
<dbReference type="SMR" id="Q91V57"/>
<dbReference type="BioGRID" id="224378">
    <property type="interactions" value="5"/>
</dbReference>
<dbReference type="FunCoup" id="Q91V57">
    <property type="interactions" value="853"/>
</dbReference>
<dbReference type="IntAct" id="Q91V57">
    <property type="interactions" value="1"/>
</dbReference>
<dbReference type="MINT" id="Q91V57"/>
<dbReference type="STRING" id="10090.ENSMUSP00000107655"/>
<dbReference type="iPTMnet" id="Q91V57"/>
<dbReference type="PhosphoSitePlus" id="Q91V57"/>
<dbReference type="SwissPalm" id="Q91V57"/>
<dbReference type="PaxDb" id="10090-ENSMUSP00000107655"/>
<dbReference type="ProteomicsDB" id="281666">
    <molecule id="Q91V57-1"/>
</dbReference>
<dbReference type="ProteomicsDB" id="281667">
    <molecule id="Q91V57-2"/>
</dbReference>
<dbReference type="ProteomicsDB" id="281668">
    <molecule id="Q91V57-3"/>
</dbReference>
<dbReference type="Antibodypedia" id="33886">
    <property type="antibodies" value="466 antibodies from 29 providers"/>
</dbReference>
<dbReference type="DNASU" id="108699"/>
<dbReference type="Ensembl" id="ENSMUST00000070579.7">
    <molecule id="Q91V57-3"/>
    <property type="protein sequence ID" value="ENSMUSP00000070301.7"/>
    <property type="gene ID" value="ENSMUSG00000056486.19"/>
</dbReference>
<dbReference type="Ensembl" id="ENSMUST00000102677.11">
    <molecule id="Q91V57-2"/>
    <property type="protein sequence ID" value="ENSMUSP00000099738.5"/>
    <property type="gene ID" value="ENSMUSG00000056486.19"/>
</dbReference>
<dbReference type="Ensembl" id="ENSMUST00000112024.10">
    <molecule id="Q91V57-1"/>
    <property type="protein sequence ID" value="ENSMUSP00000107655.4"/>
    <property type="gene ID" value="ENSMUSG00000056486.19"/>
</dbReference>
<dbReference type="Ensembl" id="ENSMUST00000180045.8">
    <molecule id="Q91V57-3"/>
    <property type="protein sequence ID" value="ENSMUSP00000137106.2"/>
    <property type="gene ID" value="ENSMUSG00000056486.19"/>
</dbReference>
<dbReference type="Ensembl" id="ENSMUST00000229731.2">
    <molecule id="Q91V57-3"/>
    <property type="protein sequence ID" value="ENSMUSP00000155037.2"/>
    <property type="gene ID" value="ENSMUSG00000056486.19"/>
</dbReference>
<dbReference type="GeneID" id="108699"/>
<dbReference type="KEGG" id="mmu:108699"/>
<dbReference type="UCSC" id="uc008kda.2">
    <molecule id="Q91V57-2"/>
    <property type="organism name" value="mouse"/>
</dbReference>
<dbReference type="UCSC" id="uc008kdb.2">
    <molecule id="Q91V57-1"/>
    <property type="organism name" value="mouse"/>
</dbReference>
<dbReference type="AGR" id="MGI:1915674"/>
<dbReference type="CTD" id="1123"/>
<dbReference type="MGI" id="MGI:1915674">
    <property type="gene designation" value="Chn1"/>
</dbReference>
<dbReference type="VEuPathDB" id="HostDB:ENSMUSG00000056486"/>
<dbReference type="eggNOG" id="KOG1453">
    <property type="taxonomic scope" value="Eukaryota"/>
</dbReference>
<dbReference type="GeneTree" id="ENSGT01030000234635"/>
<dbReference type="HOGENOM" id="CLU_015883_0_0_1"/>
<dbReference type="InParanoid" id="Q91V57"/>
<dbReference type="OMA" id="FIESAXV"/>
<dbReference type="OrthoDB" id="3196451at2759"/>
<dbReference type="PhylomeDB" id="Q91V57"/>
<dbReference type="TreeFam" id="TF342052"/>
<dbReference type="Reactome" id="R-MMU-9013148">
    <property type="pathway name" value="CDC42 GTPase cycle"/>
</dbReference>
<dbReference type="Reactome" id="R-MMU-9013149">
    <property type="pathway name" value="RAC1 GTPase cycle"/>
</dbReference>
<dbReference type="BioGRID-ORCS" id="108699">
    <property type="hits" value="3 hits in 75 CRISPR screens"/>
</dbReference>
<dbReference type="ChiTaRS" id="Chn1">
    <property type="organism name" value="mouse"/>
</dbReference>
<dbReference type="PRO" id="PR:Q91V57"/>
<dbReference type="Proteomes" id="UP000000589">
    <property type="component" value="Chromosome 2"/>
</dbReference>
<dbReference type="RNAct" id="Q91V57">
    <property type="molecule type" value="protein"/>
</dbReference>
<dbReference type="Bgee" id="ENSMUSG00000056486">
    <property type="expression patterns" value="Expressed in dentate gyrus of hippocampal formation granule cell and 214 other cell types or tissues"/>
</dbReference>
<dbReference type="ExpressionAtlas" id="Q91V57">
    <property type="expression patterns" value="baseline and differential"/>
</dbReference>
<dbReference type="GO" id="GO:0046875">
    <property type="term" value="F:ephrin receptor binding"/>
    <property type="evidence" value="ECO:0000353"/>
    <property type="project" value="UniProtKB"/>
</dbReference>
<dbReference type="GO" id="GO:0005096">
    <property type="term" value="F:GTPase activator activity"/>
    <property type="evidence" value="ECO:0007669"/>
    <property type="project" value="UniProtKB-KW"/>
</dbReference>
<dbReference type="GO" id="GO:0008270">
    <property type="term" value="F:zinc ion binding"/>
    <property type="evidence" value="ECO:0007669"/>
    <property type="project" value="UniProtKB-KW"/>
</dbReference>
<dbReference type="GO" id="GO:0048013">
    <property type="term" value="P:ephrin receptor signaling pathway"/>
    <property type="evidence" value="ECO:0000315"/>
    <property type="project" value="UniProtKB"/>
</dbReference>
<dbReference type="GO" id="GO:0008045">
    <property type="term" value="P:motor neuron axon guidance"/>
    <property type="evidence" value="ECO:0000315"/>
    <property type="project" value="UniProtKB"/>
</dbReference>
<dbReference type="GO" id="GO:0050770">
    <property type="term" value="P:regulation of axonogenesis"/>
    <property type="evidence" value="ECO:0000314"/>
    <property type="project" value="UniProtKB"/>
</dbReference>
<dbReference type="GO" id="GO:0043087">
    <property type="term" value="P:regulation of GTPase activity"/>
    <property type="evidence" value="ECO:0000314"/>
    <property type="project" value="UniProtKB"/>
</dbReference>
<dbReference type="GO" id="GO:0051056">
    <property type="term" value="P:regulation of small GTPase mediated signal transduction"/>
    <property type="evidence" value="ECO:0007669"/>
    <property type="project" value="InterPro"/>
</dbReference>
<dbReference type="GO" id="GO:0007165">
    <property type="term" value="P:signal transduction"/>
    <property type="evidence" value="ECO:0007669"/>
    <property type="project" value="InterPro"/>
</dbReference>
<dbReference type="CDD" id="cd20856">
    <property type="entry name" value="C1_alphaCHN"/>
    <property type="match status" value="1"/>
</dbReference>
<dbReference type="CDD" id="cd04372">
    <property type="entry name" value="RhoGAP_chimaerin"/>
    <property type="match status" value="1"/>
</dbReference>
<dbReference type="CDD" id="cd10352">
    <property type="entry name" value="SH2_a2chimerin_b2chimerin"/>
    <property type="match status" value="1"/>
</dbReference>
<dbReference type="FunFam" id="1.10.555.10:FF:000005">
    <property type="entry name" value="Chimaerin"/>
    <property type="match status" value="1"/>
</dbReference>
<dbReference type="FunFam" id="3.30.505.10:FF:000019">
    <property type="entry name" value="Chimaerin"/>
    <property type="match status" value="1"/>
</dbReference>
<dbReference type="FunFam" id="3.30.60.20:FF:000030">
    <property type="entry name" value="Chimaerin"/>
    <property type="match status" value="1"/>
</dbReference>
<dbReference type="Gene3D" id="3.30.60.20">
    <property type="match status" value="1"/>
</dbReference>
<dbReference type="Gene3D" id="1.10.555.10">
    <property type="entry name" value="Rho GTPase activation protein"/>
    <property type="match status" value="1"/>
</dbReference>
<dbReference type="Gene3D" id="3.30.505.10">
    <property type="entry name" value="SH2 domain"/>
    <property type="match status" value="1"/>
</dbReference>
<dbReference type="InterPro" id="IPR046349">
    <property type="entry name" value="C1-like_sf"/>
</dbReference>
<dbReference type="InterPro" id="IPR035840">
    <property type="entry name" value="Chimaerin_SH2"/>
</dbReference>
<dbReference type="InterPro" id="IPR017356">
    <property type="entry name" value="CHN1/CHN2"/>
</dbReference>
<dbReference type="InterPro" id="IPR020454">
    <property type="entry name" value="DAG/PE-bd"/>
</dbReference>
<dbReference type="InterPro" id="IPR002219">
    <property type="entry name" value="PE/DAG-bd"/>
</dbReference>
<dbReference type="InterPro" id="IPR051854">
    <property type="entry name" value="Rho-type_GAP"/>
</dbReference>
<dbReference type="InterPro" id="IPR008936">
    <property type="entry name" value="Rho_GTPase_activation_prot"/>
</dbReference>
<dbReference type="InterPro" id="IPR037860">
    <property type="entry name" value="RhoGAP_chimaerin"/>
</dbReference>
<dbReference type="InterPro" id="IPR000198">
    <property type="entry name" value="RhoGAP_dom"/>
</dbReference>
<dbReference type="InterPro" id="IPR000980">
    <property type="entry name" value="SH2"/>
</dbReference>
<dbReference type="InterPro" id="IPR036860">
    <property type="entry name" value="SH2_dom_sf"/>
</dbReference>
<dbReference type="PANTHER" id="PTHR46075">
    <property type="entry name" value="CHIMERIN FAMILY MEMBER"/>
    <property type="match status" value="1"/>
</dbReference>
<dbReference type="PANTHER" id="PTHR46075:SF1">
    <property type="entry name" value="N-CHIMAERIN"/>
    <property type="match status" value="1"/>
</dbReference>
<dbReference type="Pfam" id="PF00130">
    <property type="entry name" value="C1_1"/>
    <property type="match status" value="1"/>
</dbReference>
<dbReference type="Pfam" id="PF00620">
    <property type="entry name" value="RhoGAP"/>
    <property type="match status" value="1"/>
</dbReference>
<dbReference type="Pfam" id="PF00017">
    <property type="entry name" value="SH2"/>
    <property type="match status" value="1"/>
</dbReference>
<dbReference type="PIRSF" id="PIRSF038015">
    <property type="entry name" value="N-chimaerin"/>
    <property type="match status" value="1"/>
</dbReference>
<dbReference type="PRINTS" id="PR00008">
    <property type="entry name" value="DAGPEDOMAIN"/>
</dbReference>
<dbReference type="SMART" id="SM00109">
    <property type="entry name" value="C1"/>
    <property type="match status" value="1"/>
</dbReference>
<dbReference type="SMART" id="SM00324">
    <property type="entry name" value="RhoGAP"/>
    <property type="match status" value="1"/>
</dbReference>
<dbReference type="SMART" id="SM00252">
    <property type="entry name" value="SH2"/>
    <property type="match status" value="1"/>
</dbReference>
<dbReference type="SUPFAM" id="SSF57889">
    <property type="entry name" value="Cysteine-rich domain"/>
    <property type="match status" value="1"/>
</dbReference>
<dbReference type="SUPFAM" id="SSF48350">
    <property type="entry name" value="GTPase activation domain, GAP"/>
    <property type="match status" value="1"/>
</dbReference>
<dbReference type="SUPFAM" id="SSF55550">
    <property type="entry name" value="SH2 domain"/>
    <property type="match status" value="1"/>
</dbReference>
<dbReference type="PROSITE" id="PS50238">
    <property type="entry name" value="RHOGAP"/>
    <property type="match status" value="1"/>
</dbReference>
<dbReference type="PROSITE" id="PS50001">
    <property type="entry name" value="SH2"/>
    <property type="match status" value="1"/>
</dbReference>
<dbReference type="PROSITE" id="PS00479">
    <property type="entry name" value="ZF_DAG_PE_1"/>
    <property type="match status" value="1"/>
</dbReference>
<dbReference type="PROSITE" id="PS50081">
    <property type="entry name" value="ZF_DAG_PE_2"/>
    <property type="match status" value="1"/>
</dbReference>
<proteinExistence type="evidence at protein level"/>
<protein>
    <recommendedName>
        <fullName>N-chimaerin</fullName>
    </recommendedName>
    <alternativeName>
        <fullName>A-chimaerin</fullName>
    </alternativeName>
    <alternativeName>
        <fullName>Alpha-chimerin</fullName>
    </alternativeName>
    <alternativeName>
        <fullName>N-chimerin</fullName>
        <shortName>NC</shortName>
    </alternativeName>
    <alternativeName>
        <fullName>Rho GTPase-activating protein 2</fullName>
    </alternativeName>
</protein>
<comment type="function">
    <text evidence="1 8">GTPase-activating protein for p21-rac and a phorbol ester receptor. May play an important role in neuronal signal-transduction mechanisms (By similarity). Involved in the assembly of neuronal locomotor circuits as a direct effector of EPHA4 in axon guidance.</text>
</comment>
<comment type="subunit">
    <text evidence="7 8">Interacts with EPHA4; effector of EPHA4 in axon guidance linking EPHA4 activation to RAC1 regulation. May also interact with EPHB1 and EPHB2.</text>
</comment>
<comment type="interaction">
    <interactant intactId="EBI-1539203">
        <id>Q91V57-1</id>
    </interactant>
    <interactant intactId="EBI-1539152">
        <id>Q03137</id>
        <label>Epha4</label>
    </interactant>
    <organismsDiffer>false</organismsDiffer>
    <experiments>2</experiments>
</comment>
<comment type="alternative products">
    <event type="alternative splicing"/>
    <isoform>
        <id>Q91V57-1</id>
        <name>1</name>
        <sequence type="displayed"/>
    </isoform>
    <isoform>
        <id>Q91V57-2</id>
        <name>2</name>
        <sequence type="described" ref="VSP_020145"/>
    </isoform>
    <isoform>
        <id>Q91V57-3</id>
        <name>3</name>
        <sequence type="described" ref="VSP_020146"/>
    </isoform>
</comment>
<comment type="PTM">
    <text evidence="8">Phosphorylated. Phosphorylation is EPHA4 kinase activity-dependent.</text>
</comment>
<comment type="disruption phenotype">
    <text evidence="7">Mice are viable and fertile but display a loss of coordination of limb movement which phenocopies the one of Epha4 mutant mice.</text>
</comment>
<gene>
    <name type="primary">Chn1</name>
    <name type="synonym">Arhgap2</name>
</gene>
<feature type="initiator methionine" description="Removed" evidence="2">
    <location>
        <position position="1"/>
    </location>
</feature>
<feature type="chain" id="PRO_0000056695" description="N-chimaerin">
    <location>
        <begin position="2"/>
        <end position="459"/>
    </location>
</feature>
<feature type="domain" description="SH2" evidence="5">
    <location>
        <begin position="49"/>
        <end position="135"/>
    </location>
</feature>
<feature type="domain" description="Rho-GAP" evidence="4">
    <location>
        <begin position="268"/>
        <end position="459"/>
    </location>
</feature>
<feature type="zinc finger region" description="Phorbol-ester/DAG-type" evidence="6">
    <location>
        <begin position="205"/>
        <end position="255"/>
    </location>
</feature>
<feature type="site" description="Arginine finger; crucial for GTP hydrolysis by stabilizing the transition state" evidence="4">
    <location>
        <position position="304"/>
    </location>
</feature>
<feature type="modified residue" description="N-acetylalanine" evidence="2">
    <location>
        <position position="2"/>
    </location>
</feature>
<feature type="modified residue" description="Phosphothreonine" evidence="2">
    <location>
        <position position="192"/>
    </location>
</feature>
<feature type="modified residue" description="Phosphothreonine" evidence="3">
    <location>
        <position position="340"/>
    </location>
</feature>
<feature type="splice variant" id="VSP_020146" description="In isoform 3." evidence="11">
    <location>
        <begin position="1"/>
        <end position="249"/>
    </location>
</feature>
<feature type="splice variant" id="VSP_020145" description="In isoform 2." evidence="9 10 11">
    <original>MALTLFDTDEYRPPVWKSYLYQLQQEAPHPRRVTCTCEVENRPKYYGREYHGMISREETDQLLSVAEGSYLIRESQRQPGTYTLALRFGSQTRNFRLYYDGKHFVGEKRFESIHDLVTDGLITLYIETKAAEYIAKMTINPIYEHIGYTTLNREPAYKQHMAVLKETHDEKEATGQDGVSEKR</original>
    <variation>MPSKESWSGRKANRATVHKAKPEGRQQGLLIAALGMKLGSQKSSVTIWQPLKLFAYSQ</variation>
    <location>
        <begin position="1"/>
        <end position="183"/>
    </location>
</feature>
<feature type="sequence conflict" description="In Ref. 4; AAH54770." evidence="12" ref="4">
    <original>N</original>
    <variation>I</variation>
    <location>
        <position position="253"/>
    </location>
</feature>
<feature type="sequence conflict" description="In Ref. 2; BAE28074." evidence="12" ref="2">
    <original>K</original>
    <variation>E</variation>
    <location>
        <position position="275"/>
    </location>
</feature>
<feature type="sequence conflict" description="In Ref. 2; BAC33996." evidence="12" ref="2">
    <original>N</original>
    <variation>K</variation>
    <location>
        <position position="331"/>
    </location>
</feature>
<keyword id="KW-0007">Acetylation</keyword>
<keyword id="KW-0025">Alternative splicing</keyword>
<keyword id="KW-0343">GTPase activation</keyword>
<keyword id="KW-0479">Metal-binding</keyword>
<keyword id="KW-0524">Neurogenesis</keyword>
<keyword id="KW-0597">Phosphoprotein</keyword>
<keyword id="KW-1185">Reference proteome</keyword>
<keyword id="KW-0727">SH2 domain</keyword>
<keyword id="KW-0862">Zinc</keyword>
<keyword id="KW-0863">Zinc-finger</keyword>
<name>CHIN_MOUSE</name>
<evidence type="ECO:0000250" key="1"/>
<evidence type="ECO:0000250" key="2">
    <source>
        <dbReference type="UniProtKB" id="P15882"/>
    </source>
</evidence>
<evidence type="ECO:0000250" key="3">
    <source>
        <dbReference type="UniProtKB" id="P30337"/>
    </source>
</evidence>
<evidence type="ECO:0000255" key="4">
    <source>
        <dbReference type="PROSITE-ProRule" id="PRU00172"/>
    </source>
</evidence>
<evidence type="ECO:0000255" key="5">
    <source>
        <dbReference type="PROSITE-ProRule" id="PRU00191"/>
    </source>
</evidence>
<evidence type="ECO:0000255" key="6">
    <source>
        <dbReference type="PROSITE-ProRule" id="PRU00226"/>
    </source>
</evidence>
<evidence type="ECO:0000269" key="7">
    <source>
    </source>
</evidence>
<evidence type="ECO:0000269" key="8">
    <source>
    </source>
</evidence>
<evidence type="ECO:0000303" key="9">
    <source>
    </source>
</evidence>
<evidence type="ECO:0000303" key="10">
    <source>
    </source>
</evidence>
<evidence type="ECO:0000303" key="11">
    <source>
    </source>
</evidence>
<evidence type="ECO:0000305" key="12"/>